<evidence type="ECO:0000250" key="1"/>
<evidence type="ECO:0000256" key="2">
    <source>
        <dbReference type="SAM" id="MobiDB-lite"/>
    </source>
</evidence>
<evidence type="ECO:0000305" key="3"/>
<protein>
    <recommendedName>
        <fullName>DNA replication licensing factor MCM3</fullName>
        <ecNumber>3.6.4.12</ecNumber>
    </recommendedName>
    <alternativeName>
        <fullName>Minichromosome maintenance protein 3</fullName>
    </alternativeName>
</protein>
<keyword id="KW-0067">ATP-binding</keyword>
<keyword id="KW-0131">Cell cycle</keyword>
<keyword id="KW-0235">DNA replication</keyword>
<keyword id="KW-0238">DNA-binding</keyword>
<keyword id="KW-0347">Helicase</keyword>
<keyword id="KW-0378">Hydrolase</keyword>
<keyword id="KW-0547">Nucleotide-binding</keyword>
<keyword id="KW-0539">Nucleus</keyword>
<keyword id="KW-1185">Reference proteome</keyword>
<proteinExistence type="inferred from homology"/>
<accession>B8AZ99</accession>
<name>MCM3_ORYSI</name>
<reference key="1">
    <citation type="journal article" date="2005" name="PLoS Biol.">
        <title>The genomes of Oryza sativa: a history of duplications.</title>
        <authorList>
            <person name="Yu J."/>
            <person name="Wang J."/>
            <person name="Lin W."/>
            <person name="Li S."/>
            <person name="Li H."/>
            <person name="Zhou J."/>
            <person name="Ni P."/>
            <person name="Dong W."/>
            <person name="Hu S."/>
            <person name="Zeng C."/>
            <person name="Zhang J."/>
            <person name="Zhang Y."/>
            <person name="Li R."/>
            <person name="Xu Z."/>
            <person name="Li S."/>
            <person name="Li X."/>
            <person name="Zheng H."/>
            <person name="Cong L."/>
            <person name="Lin L."/>
            <person name="Yin J."/>
            <person name="Geng J."/>
            <person name="Li G."/>
            <person name="Shi J."/>
            <person name="Liu J."/>
            <person name="Lv H."/>
            <person name="Li J."/>
            <person name="Wang J."/>
            <person name="Deng Y."/>
            <person name="Ran L."/>
            <person name="Shi X."/>
            <person name="Wang X."/>
            <person name="Wu Q."/>
            <person name="Li C."/>
            <person name="Ren X."/>
            <person name="Wang J."/>
            <person name="Wang X."/>
            <person name="Li D."/>
            <person name="Liu D."/>
            <person name="Zhang X."/>
            <person name="Ji Z."/>
            <person name="Zhao W."/>
            <person name="Sun Y."/>
            <person name="Zhang Z."/>
            <person name="Bao J."/>
            <person name="Han Y."/>
            <person name="Dong L."/>
            <person name="Ji J."/>
            <person name="Chen P."/>
            <person name="Wu S."/>
            <person name="Liu J."/>
            <person name="Xiao Y."/>
            <person name="Bu D."/>
            <person name="Tan J."/>
            <person name="Yang L."/>
            <person name="Ye C."/>
            <person name="Zhang J."/>
            <person name="Xu J."/>
            <person name="Zhou Y."/>
            <person name="Yu Y."/>
            <person name="Zhang B."/>
            <person name="Zhuang S."/>
            <person name="Wei H."/>
            <person name="Liu B."/>
            <person name="Lei M."/>
            <person name="Yu H."/>
            <person name="Li Y."/>
            <person name="Xu H."/>
            <person name="Wei S."/>
            <person name="He X."/>
            <person name="Fang L."/>
            <person name="Zhang Z."/>
            <person name="Zhang Y."/>
            <person name="Huang X."/>
            <person name="Su Z."/>
            <person name="Tong W."/>
            <person name="Li J."/>
            <person name="Tong Z."/>
            <person name="Li S."/>
            <person name="Ye J."/>
            <person name="Wang L."/>
            <person name="Fang L."/>
            <person name="Lei T."/>
            <person name="Chen C.-S."/>
            <person name="Chen H.-C."/>
            <person name="Xu Z."/>
            <person name="Li H."/>
            <person name="Huang H."/>
            <person name="Zhang F."/>
            <person name="Xu H."/>
            <person name="Li N."/>
            <person name="Zhao C."/>
            <person name="Li S."/>
            <person name="Dong L."/>
            <person name="Huang Y."/>
            <person name="Li L."/>
            <person name="Xi Y."/>
            <person name="Qi Q."/>
            <person name="Li W."/>
            <person name="Zhang B."/>
            <person name="Hu W."/>
            <person name="Zhang Y."/>
            <person name="Tian X."/>
            <person name="Jiao Y."/>
            <person name="Liang X."/>
            <person name="Jin J."/>
            <person name="Gao L."/>
            <person name="Zheng W."/>
            <person name="Hao B."/>
            <person name="Liu S.-M."/>
            <person name="Wang W."/>
            <person name="Yuan L."/>
            <person name="Cao M."/>
            <person name="McDermott J."/>
            <person name="Samudrala R."/>
            <person name="Wang J."/>
            <person name="Wong G.K.-S."/>
            <person name="Yang H."/>
        </authorList>
    </citation>
    <scope>NUCLEOTIDE SEQUENCE [LARGE SCALE GENOMIC DNA]</scope>
    <source>
        <strain>cv. 93-11</strain>
    </source>
</reference>
<organism>
    <name type="scientific">Oryza sativa subsp. indica</name>
    <name type="common">Rice</name>
    <dbReference type="NCBI Taxonomy" id="39946"/>
    <lineage>
        <taxon>Eukaryota</taxon>
        <taxon>Viridiplantae</taxon>
        <taxon>Streptophyta</taxon>
        <taxon>Embryophyta</taxon>
        <taxon>Tracheophyta</taxon>
        <taxon>Spermatophyta</taxon>
        <taxon>Magnoliopsida</taxon>
        <taxon>Liliopsida</taxon>
        <taxon>Poales</taxon>
        <taxon>Poaceae</taxon>
        <taxon>BOP clade</taxon>
        <taxon>Oryzoideae</taxon>
        <taxon>Oryzeae</taxon>
        <taxon>Oryzinae</taxon>
        <taxon>Oryza</taxon>
        <taxon>Oryza sativa</taxon>
    </lineage>
</organism>
<gene>
    <name type="primary">MCM3</name>
    <name type="ORF">OsI_20328</name>
</gene>
<feature type="chain" id="PRO_0000425990" description="DNA replication licensing factor MCM3">
    <location>
        <begin position="1"/>
        <end position="770"/>
    </location>
</feature>
<feature type="domain" description="MCM">
    <location>
        <begin position="290"/>
        <end position="496"/>
    </location>
</feature>
<feature type="region of interest" description="Disordered" evidence="2">
    <location>
        <begin position="653"/>
        <end position="698"/>
    </location>
</feature>
<feature type="short sequence motif" description="Arginine finger">
    <location>
        <begin position="472"/>
        <end position="475"/>
    </location>
</feature>
<feature type="compositionally biased region" description="Basic and acidic residues" evidence="2">
    <location>
        <begin position="653"/>
        <end position="670"/>
    </location>
</feature>
<feature type="binding site" evidence="1">
    <location>
        <begin position="340"/>
        <end position="347"/>
    </location>
    <ligand>
        <name>ATP</name>
        <dbReference type="ChEBI" id="CHEBI:30616"/>
    </ligand>
</feature>
<sequence>MDVNEEAMAAHKRAFLDFLDQDVGKGVYMQAVRDMVQNKRHRLIIGMDDLRNHSLDLARRVIRSPAEYMQPASDAVTEVARNLDPKFLKEGQRVLVGFSGPFGFHRVTPRDLMSSFIGTMVCVEGIVTKCSLVRPKVVKSVHYCPATGGTLSREYRDITSFVGLPTGSVYPTRDENGNLLVTEYGMCEYKDHQTLSMQEVPENSAPGQLPRTVDIIVEDDLVDSCKPGDRVSIVGVYKALPGKSKGSVSGVFRTVLIANNVSLMNKEANAPVYTREDLKRMKEISRRNDTFDLLGNSLAPSIYGHLWIKKAVVLLMLGGVEKNLKNGTHLRGDINMMMVGDPSVAKSQLLRAVMNIAPLAISTTGRGSSGVGLTAAVTSDQETGERRLEAGAMVLADRGVVCIDEFDKMNDQDRVAIHEVMEQQTVTIAKAGIHASLNARCSVIAAANPIYGTYDRSLTPTKNIGLPDSLLSRFDLLFIVLDQMDPEIDRQISEHVARMHRYCTDDGGARSLDKTGYAEEDDGDVNAAIFVKYDRMLHGQDRRRGKKSKQDRLTVKFLKKYIHYAKNLIQPRLTDEASDHIATSYAELRDGGANAKSGGGTLPITARTLETIIRLSTAHAKMKLRHEVLKTDVEAALQVLNFAIYHKELTEMEEREQREMEMKQQADHDAGASGGNADEHRSSGNDPMDVDVGNASNDQDVPAERIEAFEAILGQHVLANHLDQISIDEIEQTVNREAAAPYNRRQVEFILERMQDANRIMIRDGIVRII</sequence>
<comment type="function">
    <text evidence="1">Probable component of the MCM2-7 complex (MCM complex) that may function as a DNA helicase and which is essential to undergo a single round of replication initiation and elongation per cell cycle in eukaryotic cells.</text>
</comment>
<comment type="catalytic activity">
    <reaction>
        <text>ATP + H2O = ADP + phosphate + H(+)</text>
        <dbReference type="Rhea" id="RHEA:13065"/>
        <dbReference type="ChEBI" id="CHEBI:15377"/>
        <dbReference type="ChEBI" id="CHEBI:15378"/>
        <dbReference type="ChEBI" id="CHEBI:30616"/>
        <dbReference type="ChEBI" id="CHEBI:43474"/>
        <dbReference type="ChEBI" id="CHEBI:456216"/>
        <dbReference type="EC" id="3.6.4.12"/>
    </reaction>
</comment>
<comment type="subunit">
    <text evidence="1">Component of the minichromosome maintenance (MCM) complex, a heterotetramer composed of MCM2, MCM3, MCM4, MCM5, MCM6 and MCM7.</text>
</comment>
<comment type="subcellular location">
    <subcellularLocation>
        <location evidence="3">Nucleus</location>
    </subcellularLocation>
</comment>
<comment type="similarity">
    <text evidence="3">Belongs to the MCM family.</text>
</comment>
<dbReference type="EC" id="3.6.4.12"/>
<dbReference type="EMBL" id="CM000130">
    <property type="protein sequence ID" value="EEC79399.1"/>
    <property type="molecule type" value="Genomic_DNA"/>
</dbReference>
<dbReference type="SMR" id="B8AZ99"/>
<dbReference type="STRING" id="39946.B8AZ99"/>
<dbReference type="EnsemblPlants" id="BGIOSGA020045-TA">
    <property type="protein sequence ID" value="BGIOSGA020045-PA"/>
    <property type="gene ID" value="BGIOSGA020045"/>
</dbReference>
<dbReference type="Gramene" id="BGIOSGA020045-TA">
    <property type="protein sequence ID" value="BGIOSGA020045-PA"/>
    <property type="gene ID" value="BGIOSGA020045"/>
</dbReference>
<dbReference type="HOGENOM" id="CLU_000995_6_0_1"/>
<dbReference type="OMA" id="NVYPQED"/>
<dbReference type="Proteomes" id="UP000007015">
    <property type="component" value="Chromosome 5"/>
</dbReference>
<dbReference type="GO" id="GO:0000785">
    <property type="term" value="C:chromatin"/>
    <property type="evidence" value="ECO:0007669"/>
    <property type="project" value="EnsemblPlants"/>
</dbReference>
<dbReference type="GO" id="GO:0042555">
    <property type="term" value="C:MCM complex"/>
    <property type="evidence" value="ECO:0007669"/>
    <property type="project" value="InterPro"/>
</dbReference>
<dbReference type="GO" id="GO:0000347">
    <property type="term" value="C:THO complex"/>
    <property type="evidence" value="ECO:0007669"/>
    <property type="project" value="EnsemblPlants"/>
</dbReference>
<dbReference type="GO" id="GO:0005524">
    <property type="term" value="F:ATP binding"/>
    <property type="evidence" value="ECO:0007669"/>
    <property type="project" value="UniProtKB-KW"/>
</dbReference>
<dbReference type="GO" id="GO:0016887">
    <property type="term" value="F:ATP hydrolysis activity"/>
    <property type="evidence" value="ECO:0007669"/>
    <property type="project" value="InterPro"/>
</dbReference>
<dbReference type="GO" id="GO:0003697">
    <property type="term" value="F:single-stranded DNA binding"/>
    <property type="evidence" value="ECO:0007669"/>
    <property type="project" value="TreeGrafter"/>
</dbReference>
<dbReference type="GO" id="GO:0017116">
    <property type="term" value="F:single-stranded DNA helicase activity"/>
    <property type="evidence" value="ECO:0007669"/>
    <property type="project" value="TreeGrafter"/>
</dbReference>
<dbReference type="GO" id="GO:0006271">
    <property type="term" value="P:DNA strand elongation involved in DNA replication"/>
    <property type="evidence" value="ECO:0007669"/>
    <property type="project" value="TreeGrafter"/>
</dbReference>
<dbReference type="GO" id="GO:0000727">
    <property type="term" value="P:double-strand break repair via break-induced replication"/>
    <property type="evidence" value="ECO:0007669"/>
    <property type="project" value="TreeGrafter"/>
</dbReference>
<dbReference type="GO" id="GO:1902975">
    <property type="term" value="P:mitotic DNA replication initiation"/>
    <property type="evidence" value="ECO:0007669"/>
    <property type="project" value="TreeGrafter"/>
</dbReference>
<dbReference type="CDD" id="cd17754">
    <property type="entry name" value="MCM3"/>
    <property type="match status" value="1"/>
</dbReference>
<dbReference type="FunFam" id="2.20.28.10:FF:000008">
    <property type="entry name" value="DNA helicase"/>
    <property type="match status" value="1"/>
</dbReference>
<dbReference type="FunFam" id="3.30.1640.10:FF:000012">
    <property type="entry name" value="DNA helicase"/>
    <property type="match status" value="1"/>
</dbReference>
<dbReference type="Gene3D" id="2.20.28.10">
    <property type="match status" value="1"/>
</dbReference>
<dbReference type="Gene3D" id="3.30.1640.10">
    <property type="entry name" value="mini-chromosome maintenance (MCM) complex, chain A, domain 1"/>
    <property type="match status" value="1"/>
</dbReference>
<dbReference type="Gene3D" id="2.40.50.140">
    <property type="entry name" value="Nucleic acid-binding proteins"/>
    <property type="match status" value="1"/>
</dbReference>
<dbReference type="Gene3D" id="3.40.50.300">
    <property type="entry name" value="P-loop containing nucleotide triphosphate hydrolases"/>
    <property type="match status" value="1"/>
</dbReference>
<dbReference type="InterPro" id="IPR003593">
    <property type="entry name" value="AAA+_ATPase"/>
</dbReference>
<dbReference type="InterPro" id="IPR031327">
    <property type="entry name" value="MCM"/>
</dbReference>
<dbReference type="InterPro" id="IPR008046">
    <property type="entry name" value="Mcm3"/>
</dbReference>
<dbReference type="InterPro" id="IPR018525">
    <property type="entry name" value="MCM_CS"/>
</dbReference>
<dbReference type="InterPro" id="IPR001208">
    <property type="entry name" value="MCM_dom"/>
</dbReference>
<dbReference type="InterPro" id="IPR041562">
    <property type="entry name" value="MCM_lid"/>
</dbReference>
<dbReference type="InterPro" id="IPR027925">
    <property type="entry name" value="MCM_N"/>
</dbReference>
<dbReference type="InterPro" id="IPR033762">
    <property type="entry name" value="MCM_OB"/>
</dbReference>
<dbReference type="InterPro" id="IPR012340">
    <property type="entry name" value="NA-bd_OB-fold"/>
</dbReference>
<dbReference type="InterPro" id="IPR027417">
    <property type="entry name" value="P-loop_NTPase"/>
</dbReference>
<dbReference type="InterPro" id="IPR056575">
    <property type="entry name" value="WH_MCM3_C"/>
</dbReference>
<dbReference type="PANTHER" id="PTHR11630">
    <property type="entry name" value="DNA REPLICATION LICENSING FACTOR MCM FAMILY MEMBER"/>
    <property type="match status" value="1"/>
</dbReference>
<dbReference type="PANTHER" id="PTHR11630:SF46">
    <property type="entry name" value="DNA REPLICATION LICENSING FACTOR MCM3-RELATED"/>
    <property type="match status" value="1"/>
</dbReference>
<dbReference type="Pfam" id="PF00493">
    <property type="entry name" value="MCM"/>
    <property type="match status" value="1"/>
</dbReference>
<dbReference type="Pfam" id="PF17855">
    <property type="entry name" value="MCM_lid"/>
    <property type="match status" value="1"/>
</dbReference>
<dbReference type="Pfam" id="PF14551">
    <property type="entry name" value="MCM_N"/>
    <property type="match status" value="1"/>
</dbReference>
<dbReference type="Pfam" id="PF17207">
    <property type="entry name" value="MCM_OB"/>
    <property type="match status" value="1"/>
</dbReference>
<dbReference type="Pfam" id="PF23191">
    <property type="entry name" value="WH_MCM3_C"/>
    <property type="match status" value="1"/>
</dbReference>
<dbReference type="PRINTS" id="PR01657">
    <property type="entry name" value="MCMFAMILY"/>
</dbReference>
<dbReference type="PRINTS" id="PR01659">
    <property type="entry name" value="MCMPROTEIN3"/>
</dbReference>
<dbReference type="SMART" id="SM00382">
    <property type="entry name" value="AAA"/>
    <property type="match status" value="1"/>
</dbReference>
<dbReference type="SMART" id="SM00350">
    <property type="entry name" value="MCM"/>
    <property type="match status" value="1"/>
</dbReference>
<dbReference type="SUPFAM" id="SSF50249">
    <property type="entry name" value="Nucleic acid-binding proteins"/>
    <property type="match status" value="1"/>
</dbReference>
<dbReference type="SUPFAM" id="SSF52540">
    <property type="entry name" value="P-loop containing nucleoside triphosphate hydrolases"/>
    <property type="match status" value="1"/>
</dbReference>
<dbReference type="PROSITE" id="PS00847">
    <property type="entry name" value="MCM_1"/>
    <property type="match status" value="1"/>
</dbReference>
<dbReference type="PROSITE" id="PS50051">
    <property type="entry name" value="MCM_2"/>
    <property type="match status" value="1"/>
</dbReference>